<reference key="1">
    <citation type="journal article" date="2010" name="J. Bacteriol.">
        <title>Complete genome sequence of Beijerinckia indica subsp. indica.</title>
        <authorList>
            <person name="Tamas I."/>
            <person name="Dedysh S.N."/>
            <person name="Liesack W."/>
            <person name="Stott M.B."/>
            <person name="Alam M."/>
            <person name="Murrell J.C."/>
            <person name="Dunfield P.F."/>
        </authorList>
    </citation>
    <scope>NUCLEOTIDE SEQUENCE [LARGE SCALE GENOMIC DNA]</scope>
    <source>
        <strain>ATCC 9039 / DSM 1715 / NCIMB 8712</strain>
    </source>
</reference>
<gene>
    <name evidence="1" type="primary">rlmN</name>
    <name type="ordered locus">Bind_0759</name>
</gene>
<proteinExistence type="inferred from homology"/>
<name>RLMN_BEII9</name>
<keyword id="KW-0004">4Fe-4S</keyword>
<keyword id="KW-0963">Cytoplasm</keyword>
<keyword id="KW-1015">Disulfide bond</keyword>
<keyword id="KW-0408">Iron</keyword>
<keyword id="KW-0411">Iron-sulfur</keyword>
<keyword id="KW-0479">Metal-binding</keyword>
<keyword id="KW-0489">Methyltransferase</keyword>
<keyword id="KW-1185">Reference proteome</keyword>
<keyword id="KW-0698">rRNA processing</keyword>
<keyword id="KW-0949">S-adenosyl-L-methionine</keyword>
<keyword id="KW-0808">Transferase</keyword>
<keyword id="KW-0819">tRNA processing</keyword>
<dbReference type="EC" id="2.1.1.192" evidence="1"/>
<dbReference type="EMBL" id="CP001016">
    <property type="protein sequence ID" value="ACB94409.1"/>
    <property type="molecule type" value="Genomic_DNA"/>
</dbReference>
<dbReference type="SMR" id="B2IGZ5"/>
<dbReference type="STRING" id="395963.Bind_0759"/>
<dbReference type="KEGG" id="bid:Bind_0759"/>
<dbReference type="eggNOG" id="COG0820">
    <property type="taxonomic scope" value="Bacteria"/>
</dbReference>
<dbReference type="HOGENOM" id="CLU_029101_0_0_5"/>
<dbReference type="OrthoDB" id="9793973at2"/>
<dbReference type="Proteomes" id="UP000001695">
    <property type="component" value="Chromosome"/>
</dbReference>
<dbReference type="GO" id="GO:0005737">
    <property type="term" value="C:cytoplasm"/>
    <property type="evidence" value="ECO:0007669"/>
    <property type="project" value="UniProtKB-SubCell"/>
</dbReference>
<dbReference type="GO" id="GO:0051539">
    <property type="term" value="F:4 iron, 4 sulfur cluster binding"/>
    <property type="evidence" value="ECO:0007669"/>
    <property type="project" value="UniProtKB-UniRule"/>
</dbReference>
<dbReference type="GO" id="GO:0046872">
    <property type="term" value="F:metal ion binding"/>
    <property type="evidence" value="ECO:0007669"/>
    <property type="project" value="UniProtKB-KW"/>
</dbReference>
<dbReference type="GO" id="GO:0070040">
    <property type="term" value="F:rRNA (adenine(2503)-C2-)-methyltransferase activity"/>
    <property type="evidence" value="ECO:0007669"/>
    <property type="project" value="UniProtKB-UniRule"/>
</dbReference>
<dbReference type="GO" id="GO:0019843">
    <property type="term" value="F:rRNA binding"/>
    <property type="evidence" value="ECO:0007669"/>
    <property type="project" value="UniProtKB-UniRule"/>
</dbReference>
<dbReference type="GO" id="GO:0002935">
    <property type="term" value="F:tRNA (adenine(37)-C2)-methyltransferase activity"/>
    <property type="evidence" value="ECO:0007669"/>
    <property type="project" value="UniProtKB-UniRule"/>
</dbReference>
<dbReference type="GO" id="GO:0000049">
    <property type="term" value="F:tRNA binding"/>
    <property type="evidence" value="ECO:0007669"/>
    <property type="project" value="UniProtKB-UniRule"/>
</dbReference>
<dbReference type="GO" id="GO:0070475">
    <property type="term" value="P:rRNA base methylation"/>
    <property type="evidence" value="ECO:0007669"/>
    <property type="project" value="UniProtKB-UniRule"/>
</dbReference>
<dbReference type="GO" id="GO:0030488">
    <property type="term" value="P:tRNA methylation"/>
    <property type="evidence" value="ECO:0007669"/>
    <property type="project" value="UniProtKB-UniRule"/>
</dbReference>
<dbReference type="CDD" id="cd01335">
    <property type="entry name" value="Radical_SAM"/>
    <property type="match status" value="1"/>
</dbReference>
<dbReference type="FunFam" id="3.20.20.70:FF:000008">
    <property type="entry name" value="Dual-specificity RNA methyltransferase RlmN"/>
    <property type="match status" value="1"/>
</dbReference>
<dbReference type="Gene3D" id="1.10.150.530">
    <property type="match status" value="1"/>
</dbReference>
<dbReference type="Gene3D" id="3.20.20.70">
    <property type="entry name" value="Aldolase class I"/>
    <property type="match status" value="1"/>
</dbReference>
<dbReference type="HAMAP" id="MF_01849">
    <property type="entry name" value="RNA_methyltr_RlmN"/>
    <property type="match status" value="1"/>
</dbReference>
<dbReference type="InterPro" id="IPR013785">
    <property type="entry name" value="Aldolase_TIM"/>
</dbReference>
<dbReference type="InterPro" id="IPR040072">
    <property type="entry name" value="Methyltransferase_A"/>
</dbReference>
<dbReference type="InterPro" id="IPR048641">
    <property type="entry name" value="RlmN_N"/>
</dbReference>
<dbReference type="InterPro" id="IPR027492">
    <property type="entry name" value="RNA_MTrfase_RlmN"/>
</dbReference>
<dbReference type="InterPro" id="IPR004383">
    <property type="entry name" value="rRNA_lsu_MTrfase_RlmN/Cfr"/>
</dbReference>
<dbReference type="InterPro" id="IPR007197">
    <property type="entry name" value="rSAM"/>
</dbReference>
<dbReference type="NCBIfam" id="TIGR00048">
    <property type="entry name" value="rRNA_mod_RlmN"/>
    <property type="match status" value="1"/>
</dbReference>
<dbReference type="PANTHER" id="PTHR30544">
    <property type="entry name" value="23S RRNA METHYLTRANSFERASE"/>
    <property type="match status" value="1"/>
</dbReference>
<dbReference type="PANTHER" id="PTHR30544:SF5">
    <property type="entry name" value="RADICAL SAM CORE DOMAIN-CONTAINING PROTEIN"/>
    <property type="match status" value="1"/>
</dbReference>
<dbReference type="Pfam" id="PF04055">
    <property type="entry name" value="Radical_SAM"/>
    <property type="match status" value="1"/>
</dbReference>
<dbReference type="Pfam" id="PF21016">
    <property type="entry name" value="RlmN_N"/>
    <property type="match status" value="1"/>
</dbReference>
<dbReference type="PIRSF" id="PIRSF006004">
    <property type="entry name" value="CHP00048"/>
    <property type="match status" value="1"/>
</dbReference>
<dbReference type="SFLD" id="SFLDF00275">
    <property type="entry name" value="adenosine_C2_methyltransferase"/>
    <property type="match status" value="1"/>
</dbReference>
<dbReference type="SFLD" id="SFLDG01062">
    <property type="entry name" value="methyltransferase_(Class_A)"/>
    <property type="match status" value="1"/>
</dbReference>
<dbReference type="SUPFAM" id="SSF102114">
    <property type="entry name" value="Radical SAM enzymes"/>
    <property type="match status" value="1"/>
</dbReference>
<dbReference type="PROSITE" id="PS51918">
    <property type="entry name" value="RADICAL_SAM"/>
    <property type="match status" value="1"/>
</dbReference>
<protein>
    <recommendedName>
        <fullName evidence="1">Dual-specificity RNA methyltransferase RlmN</fullName>
        <ecNumber evidence="1">2.1.1.192</ecNumber>
    </recommendedName>
    <alternativeName>
        <fullName evidence="1">23S rRNA (adenine(2503)-C(2))-methyltransferase</fullName>
    </alternativeName>
    <alternativeName>
        <fullName evidence="1">23S rRNA m2A2503 methyltransferase</fullName>
    </alternativeName>
    <alternativeName>
        <fullName evidence="1">Ribosomal RNA large subunit methyltransferase N</fullName>
    </alternativeName>
    <alternativeName>
        <fullName evidence="1">tRNA (adenine(37)-C(2))-methyltransferase</fullName>
    </alternativeName>
    <alternativeName>
        <fullName evidence="1">tRNA m2A37 methyltransferase</fullName>
    </alternativeName>
</protein>
<sequence length="391" mass="43107">MSAPAPEATIGTLPSLLGATREELGDALAAIGVPEREIRMRTAQVWHWIYFHGIRSFDTMLNVGKGLRTTLAAHYSLERPQVVSEQVSVDGTRKWLIRLPPVDAQDRGAEVECVYIPESDRGTLCISSQVGCTLTCSFCHTGTQKLVRNLSAREIVSQLVVAREKLGDFPGLVPPKDGLLPTEGNRPITNIVFMGMGEPLYNFDNVRKAVSVLSDGEGLSLSRRRITVSTAGVVPQMEALGREAGSMLAVSLHAVRDDLRDKLVPLNKKYPIKTLLEACRTYPGASNARRITFEYVMLKDINDSPAEARELIRLLKGIPAKINLIPFNPWPGAPYDCSDWDRIERFSDIVFNAGYASPVRTPRGRDILAACGQLKSETEKLRARARLLGED</sequence>
<comment type="function">
    <text evidence="1">Specifically methylates position 2 of adenine 2503 in 23S rRNA and position 2 of adenine 37 in tRNAs. m2A2503 modification seems to play a crucial role in the proofreading step occurring at the peptidyl transferase center and thus would serve to optimize ribosomal fidelity.</text>
</comment>
<comment type="catalytic activity">
    <reaction evidence="1">
        <text>adenosine(2503) in 23S rRNA + 2 reduced [2Fe-2S]-[ferredoxin] + 2 S-adenosyl-L-methionine = 2-methyladenosine(2503) in 23S rRNA + 5'-deoxyadenosine + L-methionine + 2 oxidized [2Fe-2S]-[ferredoxin] + S-adenosyl-L-homocysteine</text>
        <dbReference type="Rhea" id="RHEA:42916"/>
        <dbReference type="Rhea" id="RHEA-COMP:10000"/>
        <dbReference type="Rhea" id="RHEA-COMP:10001"/>
        <dbReference type="Rhea" id="RHEA-COMP:10152"/>
        <dbReference type="Rhea" id="RHEA-COMP:10282"/>
        <dbReference type="ChEBI" id="CHEBI:17319"/>
        <dbReference type="ChEBI" id="CHEBI:33737"/>
        <dbReference type="ChEBI" id="CHEBI:33738"/>
        <dbReference type="ChEBI" id="CHEBI:57844"/>
        <dbReference type="ChEBI" id="CHEBI:57856"/>
        <dbReference type="ChEBI" id="CHEBI:59789"/>
        <dbReference type="ChEBI" id="CHEBI:74411"/>
        <dbReference type="ChEBI" id="CHEBI:74497"/>
        <dbReference type="EC" id="2.1.1.192"/>
    </reaction>
</comment>
<comment type="catalytic activity">
    <reaction evidence="1">
        <text>adenosine(37) in tRNA + 2 reduced [2Fe-2S]-[ferredoxin] + 2 S-adenosyl-L-methionine = 2-methyladenosine(37) in tRNA + 5'-deoxyadenosine + L-methionine + 2 oxidized [2Fe-2S]-[ferredoxin] + S-adenosyl-L-homocysteine</text>
        <dbReference type="Rhea" id="RHEA:43332"/>
        <dbReference type="Rhea" id="RHEA-COMP:10000"/>
        <dbReference type="Rhea" id="RHEA-COMP:10001"/>
        <dbReference type="Rhea" id="RHEA-COMP:10162"/>
        <dbReference type="Rhea" id="RHEA-COMP:10485"/>
        <dbReference type="ChEBI" id="CHEBI:17319"/>
        <dbReference type="ChEBI" id="CHEBI:33737"/>
        <dbReference type="ChEBI" id="CHEBI:33738"/>
        <dbReference type="ChEBI" id="CHEBI:57844"/>
        <dbReference type="ChEBI" id="CHEBI:57856"/>
        <dbReference type="ChEBI" id="CHEBI:59789"/>
        <dbReference type="ChEBI" id="CHEBI:74411"/>
        <dbReference type="ChEBI" id="CHEBI:74497"/>
        <dbReference type="EC" id="2.1.1.192"/>
    </reaction>
</comment>
<comment type="cofactor">
    <cofactor evidence="1">
        <name>[4Fe-4S] cluster</name>
        <dbReference type="ChEBI" id="CHEBI:49883"/>
    </cofactor>
    <text evidence="1">Binds 1 [4Fe-4S] cluster. The cluster is coordinated with 3 cysteines and an exchangeable S-adenosyl-L-methionine.</text>
</comment>
<comment type="subcellular location">
    <subcellularLocation>
        <location evidence="1">Cytoplasm</location>
    </subcellularLocation>
</comment>
<comment type="miscellaneous">
    <text evidence="1">Reaction proceeds by a ping-pong mechanism involving intermediate methylation of a conserved cysteine residue.</text>
</comment>
<comment type="similarity">
    <text evidence="1">Belongs to the radical SAM superfamily. RlmN family.</text>
</comment>
<feature type="chain" id="PRO_0000350049" description="Dual-specificity RNA methyltransferase RlmN">
    <location>
        <begin position="1"/>
        <end position="391"/>
    </location>
</feature>
<feature type="domain" description="Radical SAM core" evidence="2">
    <location>
        <begin position="118"/>
        <end position="368"/>
    </location>
</feature>
<feature type="active site" description="Proton acceptor" evidence="1">
    <location>
        <position position="112"/>
    </location>
</feature>
<feature type="active site" description="S-methylcysteine intermediate" evidence="1">
    <location>
        <position position="371"/>
    </location>
</feature>
<feature type="binding site" evidence="1">
    <location>
        <position position="132"/>
    </location>
    <ligand>
        <name>[4Fe-4S] cluster</name>
        <dbReference type="ChEBI" id="CHEBI:49883"/>
        <note>4Fe-4S-S-AdoMet</note>
    </ligand>
</feature>
<feature type="binding site" evidence="1">
    <location>
        <position position="136"/>
    </location>
    <ligand>
        <name>[4Fe-4S] cluster</name>
        <dbReference type="ChEBI" id="CHEBI:49883"/>
        <note>4Fe-4S-S-AdoMet</note>
    </ligand>
</feature>
<feature type="binding site" evidence="1">
    <location>
        <position position="139"/>
    </location>
    <ligand>
        <name>[4Fe-4S] cluster</name>
        <dbReference type="ChEBI" id="CHEBI:49883"/>
        <note>4Fe-4S-S-AdoMet</note>
    </ligand>
</feature>
<feature type="binding site" evidence="1">
    <location>
        <begin position="197"/>
        <end position="198"/>
    </location>
    <ligand>
        <name>S-adenosyl-L-methionine</name>
        <dbReference type="ChEBI" id="CHEBI:59789"/>
    </ligand>
</feature>
<feature type="binding site" evidence="1">
    <location>
        <position position="229"/>
    </location>
    <ligand>
        <name>S-adenosyl-L-methionine</name>
        <dbReference type="ChEBI" id="CHEBI:59789"/>
    </ligand>
</feature>
<feature type="binding site" evidence="1">
    <location>
        <begin position="251"/>
        <end position="253"/>
    </location>
    <ligand>
        <name>S-adenosyl-L-methionine</name>
        <dbReference type="ChEBI" id="CHEBI:59789"/>
    </ligand>
</feature>
<feature type="binding site" evidence="1">
    <location>
        <position position="328"/>
    </location>
    <ligand>
        <name>S-adenosyl-L-methionine</name>
        <dbReference type="ChEBI" id="CHEBI:59789"/>
    </ligand>
</feature>
<feature type="disulfide bond" description="(transient)" evidence="1">
    <location>
        <begin position="125"/>
        <end position="371"/>
    </location>
</feature>
<accession>B2IGZ5</accession>
<evidence type="ECO:0000255" key="1">
    <source>
        <dbReference type="HAMAP-Rule" id="MF_01849"/>
    </source>
</evidence>
<evidence type="ECO:0000255" key="2">
    <source>
        <dbReference type="PROSITE-ProRule" id="PRU01266"/>
    </source>
</evidence>
<organism>
    <name type="scientific">Beijerinckia indica subsp. indica (strain ATCC 9039 / DSM 1715 / NCIMB 8712)</name>
    <dbReference type="NCBI Taxonomy" id="395963"/>
    <lineage>
        <taxon>Bacteria</taxon>
        <taxon>Pseudomonadati</taxon>
        <taxon>Pseudomonadota</taxon>
        <taxon>Alphaproteobacteria</taxon>
        <taxon>Hyphomicrobiales</taxon>
        <taxon>Beijerinckiaceae</taxon>
        <taxon>Beijerinckia</taxon>
    </lineage>
</organism>